<name>Y723_TREPA</name>
<dbReference type="EMBL" id="AE000520">
    <property type="protein sequence ID" value="AAC65696.1"/>
    <property type="molecule type" value="Genomic_DNA"/>
</dbReference>
<dbReference type="PIR" id="G71291">
    <property type="entry name" value="G71291"/>
</dbReference>
<dbReference type="IntAct" id="O83711">
    <property type="interactions" value="1"/>
</dbReference>
<dbReference type="EnsemblBacteria" id="AAC65696">
    <property type="protein sequence ID" value="AAC65696"/>
    <property type="gene ID" value="TP_0723"/>
</dbReference>
<dbReference type="KEGG" id="tpa:TP_0723"/>
<dbReference type="HOGENOM" id="CLU_3241009_0_0_12"/>
<dbReference type="Proteomes" id="UP000000811">
    <property type="component" value="Chromosome"/>
</dbReference>
<organism>
    <name type="scientific">Treponema pallidum (strain Nichols)</name>
    <dbReference type="NCBI Taxonomy" id="243276"/>
    <lineage>
        <taxon>Bacteria</taxon>
        <taxon>Pseudomonadati</taxon>
        <taxon>Spirochaetota</taxon>
        <taxon>Spirochaetia</taxon>
        <taxon>Spirochaetales</taxon>
        <taxon>Treponemataceae</taxon>
        <taxon>Treponema</taxon>
    </lineage>
</organism>
<reference key="1">
    <citation type="journal article" date="1998" name="Science">
        <title>Complete genome sequence of Treponema pallidum, the syphilis spirochete.</title>
        <authorList>
            <person name="Fraser C.M."/>
            <person name="Norris S.J."/>
            <person name="Weinstock G.M."/>
            <person name="White O."/>
            <person name="Sutton G.G."/>
            <person name="Dodson R.J."/>
            <person name="Gwinn M.L."/>
            <person name="Hickey E.K."/>
            <person name="Clayton R.A."/>
            <person name="Ketchum K.A."/>
            <person name="Sodergren E."/>
            <person name="Hardham J.M."/>
            <person name="McLeod M.P."/>
            <person name="Salzberg S.L."/>
            <person name="Peterson J.D."/>
            <person name="Khalak H.G."/>
            <person name="Richardson D.L."/>
            <person name="Howell J.K."/>
            <person name="Chidambaram M."/>
            <person name="Utterback T.R."/>
            <person name="McDonald L.A."/>
            <person name="Artiach P."/>
            <person name="Bowman C."/>
            <person name="Cotton M.D."/>
            <person name="Fujii C."/>
            <person name="Garland S.A."/>
            <person name="Hatch B."/>
            <person name="Horst K."/>
            <person name="Roberts K.M."/>
            <person name="Sandusky M."/>
            <person name="Weidman J.F."/>
            <person name="Smith H.O."/>
            <person name="Venter J.C."/>
        </authorList>
    </citation>
    <scope>NUCLEOTIDE SEQUENCE [LARGE SCALE GENOMIC DNA]</scope>
    <source>
        <strain>Nichols</strain>
    </source>
</reference>
<sequence>MMVHFRFPFPGGEFPVSAQPEFELVARLHAAVVREEDVWQKRTP</sequence>
<feature type="chain" id="PRO_0000202311" description="Uncharacterized protein TP_0723">
    <location>
        <begin position="1"/>
        <end position="44"/>
    </location>
</feature>
<protein>
    <recommendedName>
        <fullName>Uncharacterized protein TP_0723</fullName>
    </recommendedName>
</protein>
<proteinExistence type="predicted"/>
<keyword id="KW-1185">Reference proteome</keyword>
<gene>
    <name type="ordered locus">TP_0723</name>
</gene>
<accession>O83711</accession>